<accession>C3KXS9</accession>
<name>Y037_CLOB6</name>
<keyword id="KW-0963">Cytoplasm</keyword>
<keyword id="KW-0238">DNA-binding</keyword>
<sequence length="113" mass="12271">MARGGFPNMGGANMNNLMKQAQKLQQDMEKMQGEMEKKEFSATVGGGAVTAVANGKKQIVDIKIEPEVVDEDDIEMLEDLIMSACNEALKKAEEDTSSEVKRLTGGMNLPGMF</sequence>
<gene>
    <name type="ordered locus">CLJ_B0037</name>
</gene>
<comment type="function">
    <text evidence="1">Binds to DNA and alters its conformation. May be involved in regulation of gene expression, nucleoid organization and DNA protection.</text>
</comment>
<comment type="subunit">
    <text evidence="1">Homodimer.</text>
</comment>
<comment type="subcellular location">
    <subcellularLocation>
        <location evidence="1">Cytoplasm</location>
        <location evidence="1">Nucleoid</location>
    </subcellularLocation>
</comment>
<comment type="similarity">
    <text evidence="1">Belongs to the YbaB/EbfC family.</text>
</comment>
<dbReference type="EMBL" id="CP001083">
    <property type="protein sequence ID" value="ACQ54320.1"/>
    <property type="molecule type" value="Genomic_DNA"/>
</dbReference>
<dbReference type="RefSeq" id="WP_003359499.1">
    <property type="nucleotide sequence ID" value="NC_012658.1"/>
</dbReference>
<dbReference type="SMR" id="C3KXS9"/>
<dbReference type="KEGG" id="cbi:CLJ_B0037"/>
<dbReference type="HOGENOM" id="CLU_140930_1_0_9"/>
<dbReference type="Proteomes" id="UP000002333">
    <property type="component" value="Chromosome"/>
</dbReference>
<dbReference type="GO" id="GO:0043590">
    <property type="term" value="C:bacterial nucleoid"/>
    <property type="evidence" value="ECO:0007669"/>
    <property type="project" value="UniProtKB-UniRule"/>
</dbReference>
<dbReference type="GO" id="GO:0005829">
    <property type="term" value="C:cytosol"/>
    <property type="evidence" value="ECO:0007669"/>
    <property type="project" value="TreeGrafter"/>
</dbReference>
<dbReference type="GO" id="GO:0003677">
    <property type="term" value="F:DNA binding"/>
    <property type="evidence" value="ECO:0007669"/>
    <property type="project" value="UniProtKB-UniRule"/>
</dbReference>
<dbReference type="FunFam" id="3.30.1310.10:FF:000002">
    <property type="entry name" value="Nucleoid-associated protein IKC_06587"/>
    <property type="match status" value="1"/>
</dbReference>
<dbReference type="Gene3D" id="3.30.1310.10">
    <property type="entry name" value="Nucleoid-associated protein YbaB-like domain"/>
    <property type="match status" value="1"/>
</dbReference>
<dbReference type="HAMAP" id="MF_00274">
    <property type="entry name" value="DNA_YbaB_EbfC"/>
    <property type="match status" value="1"/>
</dbReference>
<dbReference type="InterPro" id="IPR036894">
    <property type="entry name" value="YbaB-like_sf"/>
</dbReference>
<dbReference type="InterPro" id="IPR004401">
    <property type="entry name" value="YbaB/EbfC"/>
</dbReference>
<dbReference type="NCBIfam" id="TIGR00103">
    <property type="entry name" value="DNA_YbaB_EbfC"/>
    <property type="match status" value="1"/>
</dbReference>
<dbReference type="PANTHER" id="PTHR33449">
    <property type="entry name" value="NUCLEOID-ASSOCIATED PROTEIN YBAB"/>
    <property type="match status" value="1"/>
</dbReference>
<dbReference type="PANTHER" id="PTHR33449:SF1">
    <property type="entry name" value="NUCLEOID-ASSOCIATED PROTEIN YBAB"/>
    <property type="match status" value="1"/>
</dbReference>
<dbReference type="Pfam" id="PF02575">
    <property type="entry name" value="YbaB_DNA_bd"/>
    <property type="match status" value="1"/>
</dbReference>
<dbReference type="PIRSF" id="PIRSF004555">
    <property type="entry name" value="UCP004555"/>
    <property type="match status" value="1"/>
</dbReference>
<dbReference type="SUPFAM" id="SSF82607">
    <property type="entry name" value="YbaB-like"/>
    <property type="match status" value="1"/>
</dbReference>
<proteinExistence type="inferred from homology"/>
<organism>
    <name type="scientific">Clostridium botulinum (strain 657 / Type Ba4)</name>
    <dbReference type="NCBI Taxonomy" id="515621"/>
    <lineage>
        <taxon>Bacteria</taxon>
        <taxon>Bacillati</taxon>
        <taxon>Bacillota</taxon>
        <taxon>Clostridia</taxon>
        <taxon>Eubacteriales</taxon>
        <taxon>Clostridiaceae</taxon>
        <taxon>Clostridium</taxon>
    </lineage>
</organism>
<evidence type="ECO:0000255" key="1">
    <source>
        <dbReference type="HAMAP-Rule" id="MF_00274"/>
    </source>
</evidence>
<evidence type="ECO:0000256" key="2">
    <source>
        <dbReference type="SAM" id="MobiDB-lite"/>
    </source>
</evidence>
<protein>
    <recommendedName>
        <fullName evidence="1">Nucleoid-associated protein CLJ_B0037</fullName>
    </recommendedName>
</protein>
<reference key="1">
    <citation type="submission" date="2008-05" db="EMBL/GenBank/DDBJ databases">
        <title>Genome sequence of Clostridium botulinum Ba4 strain 657.</title>
        <authorList>
            <person name="Shrivastava S."/>
            <person name="Brown J.L."/>
            <person name="Bruce D."/>
            <person name="Detter C."/>
            <person name="Munk C."/>
            <person name="Smith L.A."/>
            <person name="Smith T.J."/>
            <person name="Sutton G."/>
            <person name="Brettin T.S."/>
        </authorList>
    </citation>
    <scope>NUCLEOTIDE SEQUENCE [LARGE SCALE GENOMIC DNA]</scope>
    <source>
        <strain>657 / Type Ba4</strain>
    </source>
</reference>
<feature type="chain" id="PRO_1000204764" description="Nucleoid-associated protein CLJ_B0037">
    <location>
        <begin position="1"/>
        <end position="113"/>
    </location>
</feature>
<feature type="region of interest" description="Disordered" evidence="2">
    <location>
        <begin position="93"/>
        <end position="113"/>
    </location>
</feature>
<feature type="compositionally biased region" description="Basic and acidic residues" evidence="2">
    <location>
        <begin position="93"/>
        <end position="102"/>
    </location>
</feature>